<reference key="1">
    <citation type="journal article" date="2004" name="J. Gen. Virol.">
        <title>Genetic content of wild-type human cytomegalovirus.</title>
        <authorList>
            <person name="Dolan A."/>
            <person name="Cunningham C."/>
            <person name="Hector R.D."/>
            <person name="Hassan-Walker A.F."/>
            <person name="Lee L."/>
            <person name="Addison C."/>
            <person name="Dargan D.J."/>
            <person name="McGeoch D.J."/>
            <person name="Gatherer D."/>
            <person name="Emery V.C."/>
            <person name="Griffiths P.D."/>
            <person name="Sinzger C."/>
            <person name="McSharry B.P."/>
            <person name="Wilkinson G.W.G."/>
            <person name="Davison A.J."/>
        </authorList>
    </citation>
    <scope>NUCLEOTIDE SEQUENCE [LARGE SCALE GENOMIC DNA]</scope>
</reference>
<keyword id="KW-0325">Glycoprotein</keyword>
<keyword id="KW-0472">Membrane</keyword>
<keyword id="KW-1185">Reference proteome</keyword>
<keyword id="KW-0732">Signal</keyword>
<keyword id="KW-0812">Transmembrane</keyword>
<keyword id="KW-1133">Transmembrane helix</keyword>
<keyword id="KW-0946">Virion</keyword>
<organismHost>
    <name type="scientific">Homo sapiens</name>
    <name type="common">Human</name>
    <dbReference type="NCBI Taxonomy" id="9606"/>
</organismHost>
<proteinExistence type="inferred from homology"/>
<evidence type="ECO:0000250" key="1"/>
<evidence type="ECO:0000255" key="2"/>
<evidence type="ECO:0000256" key="3">
    <source>
        <dbReference type="SAM" id="MobiDB-lite"/>
    </source>
</evidence>
<evidence type="ECO:0000305" key="4"/>
<name>IR10_HCMVM</name>
<dbReference type="EMBL" id="AY446894">
    <property type="protein sequence ID" value="AAR31564.1"/>
    <property type="molecule type" value="Genomic_DNA"/>
</dbReference>
<dbReference type="RefSeq" id="YP_081458.1">
    <property type="nucleotide sequence ID" value="NC_006273.2"/>
</dbReference>
<dbReference type="SMR" id="F5HI32"/>
<dbReference type="GlyCosmos" id="F5HI32">
    <property type="glycosylation" value="3 sites, No reported glycans"/>
</dbReference>
<dbReference type="DNASU" id="3077518"/>
<dbReference type="GeneID" id="3077518"/>
<dbReference type="KEGG" id="vg:3077518"/>
<dbReference type="Reactome" id="R-HSA-9609690">
    <property type="pathway name" value="HCMV Early Events"/>
</dbReference>
<dbReference type="Proteomes" id="UP000000938">
    <property type="component" value="Segment"/>
</dbReference>
<dbReference type="GO" id="GO:0005886">
    <property type="term" value="C:plasma membrane"/>
    <property type="evidence" value="ECO:0000304"/>
    <property type="project" value="Reactome"/>
</dbReference>
<dbReference type="GO" id="GO:0019031">
    <property type="term" value="C:viral envelope"/>
    <property type="evidence" value="ECO:0000304"/>
    <property type="project" value="Reactome"/>
</dbReference>
<dbReference type="GO" id="GO:0055036">
    <property type="term" value="C:virion membrane"/>
    <property type="evidence" value="ECO:0007669"/>
    <property type="project" value="UniProtKB-SubCell"/>
</dbReference>
<dbReference type="InterPro" id="IPR009284">
    <property type="entry name" value="Cytomega_TRL10"/>
</dbReference>
<dbReference type="Pfam" id="PF06084">
    <property type="entry name" value="Cytomega_TRL10"/>
    <property type="match status" value="1"/>
</dbReference>
<dbReference type="PIRSF" id="PIRSF018454">
    <property type="entry name" value="Cytomega_TRL10"/>
    <property type="match status" value="1"/>
</dbReference>
<accession>F5HI32</accession>
<protein>
    <recommendedName>
        <fullName>Protein IRL10</fullName>
        <shortName>TRL10</shortName>
    </recommendedName>
</protein>
<comment type="subcellular location">
    <subcellularLocation>
        <location evidence="1">Virion membrane</location>
        <topology evidence="1">Single-pass membrane protein</topology>
    </subcellularLocation>
</comment>
<comment type="similarity">
    <text evidence="4">Belongs to the HHV-5 RL10 protein family.</text>
</comment>
<sequence>MYPRVMHAVCFLALGLISYVAVCAENTVTTNCLVKAENTHLTCKCNPNTTSNTNNGSKCHAMCKCRVTEPITMLGAYSAWGAGSFVATLIVLLVVFFVIYAREEEKNNTGTEVDQCLAYRSLTRKKLEQHAAKKQNIYERIPYRPSRQNDNSPLIEPTGTDDEEDEDDDV</sequence>
<feature type="signal peptide" evidence="2">
    <location>
        <begin position="1"/>
        <end position="24"/>
    </location>
</feature>
<feature type="chain" id="PRO_0000418309" description="Protein IRL10">
    <location>
        <begin position="25"/>
        <end position="170"/>
    </location>
</feature>
<feature type="transmembrane region" description="Helical" evidence="2">
    <location>
        <begin position="79"/>
        <end position="99"/>
    </location>
</feature>
<feature type="region of interest" description="Disordered" evidence="3">
    <location>
        <begin position="132"/>
        <end position="170"/>
    </location>
</feature>
<feature type="compositionally biased region" description="Acidic residues" evidence="3">
    <location>
        <begin position="159"/>
        <end position="170"/>
    </location>
</feature>
<feature type="glycosylation site" description="N-linked (GlcNAc...) asparagine; by host" evidence="2">
    <location>
        <position position="48"/>
    </location>
</feature>
<feature type="glycosylation site" description="N-linked (GlcNAc...) asparagine; by host" evidence="2">
    <location>
        <position position="55"/>
    </location>
</feature>
<feature type="glycosylation site" description="N-linked (GlcNAc...) asparagine; by host" evidence="2">
    <location>
        <position position="107"/>
    </location>
</feature>
<organism>
    <name type="scientific">Human cytomegalovirus (strain Merlin)</name>
    <name type="common">HHV-5</name>
    <name type="synonym">Human herpesvirus 5</name>
    <dbReference type="NCBI Taxonomy" id="295027"/>
    <lineage>
        <taxon>Viruses</taxon>
        <taxon>Duplodnaviria</taxon>
        <taxon>Heunggongvirae</taxon>
        <taxon>Peploviricota</taxon>
        <taxon>Herviviricetes</taxon>
        <taxon>Herpesvirales</taxon>
        <taxon>Orthoherpesviridae</taxon>
        <taxon>Betaherpesvirinae</taxon>
        <taxon>Cytomegalovirus</taxon>
        <taxon>Cytomegalovirus humanbeta5</taxon>
        <taxon>Human cytomegalovirus</taxon>
    </lineage>
</organism>
<gene>
    <name type="primary">RL10</name>
</gene>